<accession>P05687</accession>
<name>CHHA2_BOMMO</name>
<protein>
    <recommendedName>
        <fullName>Chorion class high-cysteine HCA protein 12</fullName>
        <shortName>HC-A.12</shortName>
    </recommendedName>
</protein>
<organism>
    <name type="scientific">Bombyx mori</name>
    <name type="common">Silk moth</name>
    <dbReference type="NCBI Taxonomy" id="7091"/>
    <lineage>
        <taxon>Eukaryota</taxon>
        <taxon>Metazoa</taxon>
        <taxon>Ecdysozoa</taxon>
        <taxon>Arthropoda</taxon>
        <taxon>Hexapoda</taxon>
        <taxon>Insecta</taxon>
        <taxon>Pterygota</taxon>
        <taxon>Neoptera</taxon>
        <taxon>Endopterygota</taxon>
        <taxon>Lepidoptera</taxon>
        <taxon>Glossata</taxon>
        <taxon>Ditrysia</taxon>
        <taxon>Bombycoidea</taxon>
        <taxon>Bombycidae</taxon>
        <taxon>Bombycinae</taxon>
        <taxon>Bombyx</taxon>
    </lineage>
</organism>
<evidence type="ECO:0000305" key="1"/>
<comment type="function">
    <text>This protein is one of many from the eggshell of the silk moth.</text>
</comment>
<comment type="similarity">
    <text evidence="1">Belongs to the chorion protein family.</text>
</comment>
<dbReference type="EMBL" id="K02835">
    <property type="protein sequence ID" value="AAA27834.1"/>
    <property type="molecule type" value="Genomic_DNA"/>
</dbReference>
<dbReference type="PIR" id="A21761">
    <property type="entry name" value="A21761"/>
</dbReference>
<dbReference type="InParanoid" id="P05687"/>
<dbReference type="Proteomes" id="UP000005204">
    <property type="component" value="Unassembled WGS sequence"/>
</dbReference>
<keyword id="KW-1185">Reference proteome</keyword>
<keyword id="KW-0677">Repeat</keyword>
<keyword id="KW-0732">Signal</keyword>
<reference key="1">
    <citation type="journal article" date="1984" name="Proc. Natl. Acad. Sci. U.S.A.">
        <title>DNA sequence transfer between two high-cysteine chorion gene families in the silkmoth Bombyx mori.</title>
        <authorList>
            <person name="Iatrou K."/>
            <person name="Tsitilou S.G."/>
            <person name="Kafatos F.C."/>
        </authorList>
    </citation>
    <scope>NUCLEOTIDE SEQUENCE [GENOMIC DNA]</scope>
</reference>
<feature type="signal peptide">
    <location>
        <begin position="1"/>
        <end position="21"/>
    </location>
</feature>
<feature type="chain" id="PRO_0000005381" description="Chorion class high-cysteine HCA protein 12">
    <location>
        <begin position="22"/>
        <end position="124"/>
    </location>
</feature>
<feature type="region of interest" description="Left arm">
    <location>
        <begin position="22"/>
        <end position="35"/>
    </location>
</feature>
<feature type="region of interest" description="Central domain">
    <location>
        <begin position="36"/>
        <end position="83"/>
    </location>
</feature>
<feature type="region of interest" description="Right arm (Gly- and Cys-rich tandem repeats)">
    <location>
        <begin position="84"/>
        <end position="124"/>
    </location>
</feature>
<sequence length="124" mass="11639">MFTFALLLLCVQGCLIQNVYGQCCGCGCGGGCGCGCYGGEGDGNVNVCGELPVCGETLVCGRVPICGGVCFKGPACASGCVSICGRCCGCGCGGCGGCGCGCGGCGCGCGGCGGCGCGRRCCCC</sequence>
<proteinExistence type="inferred from homology"/>